<evidence type="ECO:0000250" key="1"/>
<evidence type="ECO:0000269" key="2">
    <source>
    </source>
</evidence>
<evidence type="ECO:0000305" key="3"/>
<protein>
    <recommendedName>
        <fullName>Porin-like protein H</fullName>
    </recommendedName>
    <alternativeName>
        <fullName>37 kDa outer membrane protein</fullName>
    </alternativeName>
</protein>
<organism>
    <name type="scientific">Photobacterium profundum (strain SS9)</name>
    <dbReference type="NCBI Taxonomy" id="298386"/>
    <lineage>
        <taxon>Bacteria</taxon>
        <taxon>Pseudomonadati</taxon>
        <taxon>Pseudomonadota</taxon>
        <taxon>Gammaproteobacteria</taxon>
        <taxon>Vibrionales</taxon>
        <taxon>Vibrionaceae</taxon>
        <taxon>Photobacterium</taxon>
    </lineage>
</organism>
<dbReference type="EMBL" id="X67094">
    <property type="protein sequence ID" value="CAA47466.1"/>
    <property type="molecule type" value="Genomic_DNA"/>
</dbReference>
<dbReference type="EMBL" id="CR378666">
    <property type="protein sequence ID" value="CAG19423.1"/>
    <property type="molecule type" value="Genomic_DNA"/>
</dbReference>
<dbReference type="RefSeq" id="WP_011217757.1">
    <property type="nucleotide sequence ID" value="NC_006370.1"/>
</dbReference>
<dbReference type="SMR" id="P29739"/>
<dbReference type="STRING" id="298386.PBPRA1012"/>
<dbReference type="TCDB" id="1.B.1.8.3">
    <property type="family name" value="the general bacterial porin (gbp) family"/>
</dbReference>
<dbReference type="KEGG" id="ppr:PBPRA1012"/>
<dbReference type="eggNOG" id="COG3203">
    <property type="taxonomic scope" value="Bacteria"/>
</dbReference>
<dbReference type="HOGENOM" id="CLU_070337_0_0_6"/>
<dbReference type="Proteomes" id="UP000000593">
    <property type="component" value="Chromosome 1"/>
</dbReference>
<dbReference type="GO" id="GO:0009279">
    <property type="term" value="C:cell outer membrane"/>
    <property type="evidence" value="ECO:0007669"/>
    <property type="project" value="UniProtKB-SubCell"/>
</dbReference>
<dbReference type="GO" id="GO:0046930">
    <property type="term" value="C:pore complex"/>
    <property type="evidence" value="ECO:0007669"/>
    <property type="project" value="UniProtKB-KW"/>
</dbReference>
<dbReference type="GO" id="GO:0015288">
    <property type="term" value="F:porin activity"/>
    <property type="evidence" value="ECO:0007669"/>
    <property type="project" value="UniProtKB-KW"/>
</dbReference>
<dbReference type="GO" id="GO:0006811">
    <property type="term" value="P:monoatomic ion transport"/>
    <property type="evidence" value="ECO:0007669"/>
    <property type="project" value="UniProtKB-KW"/>
</dbReference>
<dbReference type="Gene3D" id="2.40.160.10">
    <property type="entry name" value="Porin"/>
    <property type="match status" value="1"/>
</dbReference>
<dbReference type="InterPro" id="IPR050298">
    <property type="entry name" value="Gram-neg_bact_OMP"/>
</dbReference>
<dbReference type="InterPro" id="IPR033900">
    <property type="entry name" value="Gram_neg_porin_domain"/>
</dbReference>
<dbReference type="InterPro" id="IPR023614">
    <property type="entry name" value="Porin_dom_sf"/>
</dbReference>
<dbReference type="PANTHER" id="PTHR34501:SF2">
    <property type="entry name" value="OUTER MEMBRANE PORIN F-RELATED"/>
    <property type="match status" value="1"/>
</dbReference>
<dbReference type="PANTHER" id="PTHR34501">
    <property type="entry name" value="PROTEIN YDDL-RELATED"/>
    <property type="match status" value="1"/>
</dbReference>
<dbReference type="Pfam" id="PF13609">
    <property type="entry name" value="Porin_4"/>
    <property type="match status" value="1"/>
</dbReference>
<dbReference type="SUPFAM" id="SSF56935">
    <property type="entry name" value="Porins"/>
    <property type="match status" value="1"/>
</dbReference>
<gene>
    <name type="primary">ompH</name>
    <name type="ordered locus">PBPRA1012</name>
</gene>
<accession>P29739</accession>
<reference key="1">
    <citation type="journal article" date="1993" name="Gene">
        <title>Sequence of the ompH gene from the deep-sea bacterium Photobacterium SS9.</title>
        <authorList>
            <person name="Bartlett D.H."/>
            <person name="Chi E."/>
            <person name="Wright M.E."/>
        </authorList>
    </citation>
    <scope>NUCLEOTIDE SEQUENCE [GENOMIC DNA]</scope>
</reference>
<reference key="2">
    <citation type="journal article" date="2005" name="Science">
        <title>Life at depth: Photobacterium profundum genome sequence and expression analysis.</title>
        <authorList>
            <person name="Vezzi A."/>
            <person name="Campanaro S."/>
            <person name="D'Angelo M."/>
            <person name="Simonato F."/>
            <person name="Vitulo N."/>
            <person name="Lauro F.M."/>
            <person name="Cestaro A."/>
            <person name="Malacrida G."/>
            <person name="Simionati B."/>
            <person name="Cannata N."/>
            <person name="Romualdi C."/>
            <person name="Bartlett D.H."/>
            <person name="Valle G."/>
        </authorList>
    </citation>
    <scope>NUCLEOTIDE SEQUENCE [LARGE SCALE GENOMIC DNA]</scope>
    <source>
        <strain>ATCC BAA-1253 / SS9</strain>
    </source>
</reference>
<reference key="3">
    <citation type="journal article" date="1989" name="Nature">
        <title>Isolation of a gene regulated by hydrostatic pressure in a deep-sea bacterium.</title>
        <authorList>
            <person name="Bartlett D.H."/>
            <person name="Wright M.E."/>
            <person name="Yayanos A.A."/>
            <person name="Siverman M."/>
        </authorList>
    </citation>
    <scope>PROTEIN SEQUENCE OF 20-40</scope>
</reference>
<sequence>MKKTLVALAILTAAGSANAGINLYDADGVKTDLSGAAEVQYRQTFKEDSDAELRMDDGDLAVNTTVAISDSLNAVAAVAFEFEDGKVTNDELWVGVAGDFGTLTAGRQYMLADDAGVGKDYELGGDGIDFVQANGDQVVKYVFDNGQFYGGVGALITETNPDNNADEASVYEGRLGARFGDFDVRAYLYSGEDVNTDNFDVFGDDKVNVDIDGYQIEAEYIVNAFAFAASFGQVDYELASDSSQKIEADTAALAGSYTMNKTTFAVGYTYWSPEAKGTVKKMEEANVFYANVTQQLHSNVKVYGEIGSSDTDNSEFGYVAGMEVTF</sequence>
<keyword id="KW-0998">Cell outer membrane</keyword>
<keyword id="KW-0903">Direct protein sequencing</keyword>
<keyword id="KW-0406">Ion transport</keyword>
<keyword id="KW-0472">Membrane</keyword>
<keyword id="KW-0626">Porin</keyword>
<keyword id="KW-1185">Reference proteome</keyword>
<keyword id="KW-0732">Signal</keyword>
<keyword id="KW-0812">Transmembrane</keyword>
<keyword id="KW-1134">Transmembrane beta strand</keyword>
<keyword id="KW-0813">Transport</keyword>
<comment type="function">
    <text evidence="1">Forms pores that allow passive diffusion of small molecules across the outer membrane.</text>
</comment>
<comment type="subunit">
    <text>Oligomer.</text>
</comment>
<comment type="subcellular location">
    <subcellularLocation>
        <location>Cell outer membrane</location>
        <topology>Multi-pass membrane protein</topology>
    </subcellularLocation>
</comment>
<comment type="induction">
    <text>In response to elevated hydrostatic pressure.</text>
</comment>
<comment type="similarity">
    <text evidence="3">Belongs to the Gram-negative porin family.</text>
</comment>
<proteinExistence type="evidence at protein level"/>
<name>OMPH_PHOPR</name>
<feature type="signal peptide" evidence="2">
    <location>
        <begin position="1"/>
        <end position="19"/>
    </location>
</feature>
<feature type="chain" id="PRO_0000025286" description="Porin-like protein H">
    <location>
        <begin position="20"/>
        <end position="326"/>
    </location>
</feature>